<keyword id="KW-0119">Carbohydrate metabolism</keyword>
<keyword id="KW-0968">Cytoplasmic vesicle</keyword>
<keyword id="KW-1015">Disulfide bond</keyword>
<keyword id="KW-0325">Glycoprotein</keyword>
<keyword id="KW-0326">Glycosidase</keyword>
<keyword id="KW-0378">Hydrolase</keyword>
<keyword id="KW-1185">Reference proteome</keyword>
<keyword id="KW-0732">Signal</keyword>
<sequence length="493" mass="53855">MHLPSLSVALALVSSSLALPQTVLPESDVSSHAAAVKEAFSHAWDGYMKYAFPHDELLPISNSYGDSRNGWGASAVDALSTAIVMRNATIVNQILDHIAKIDYSKTSDTVSLFETTIRYLGGMLSGYDLLKGPAADLVKDSTKVDMLLQQSKNLGDVLKFAFDTPSGVPYNNINITSHGNDGATTNGLAVTGTLVLEWTRLSDLTGDQEYAKLSQRAESYLLAPQPSSGEPFPGLVGSEISIQTGQFTNGFVSWNGGSDSFYEYLMKMYVYDPKRFATYKDRWVAAAESSIDHLASSPASRPDLTFLATYNKGSLGLSSQHLACFDGGSYLLGGTVLDRADLIDFGLKLVDGCAETYHQTLTGIGPESFGWDEKSVPADQKEFYERAGFYVQSGAYILRPEVIESFYYAYRVTGKKQYRDWVWNAFVNINKYCRTGSGFAGLTDVNAVNGGNRYDNQESFLFAEVMKYAYLTHAPGMSPISIADEDKANESRG</sequence>
<reference key="1">
    <citation type="journal article" date="2008" name="PLoS Genet.">
        <title>Genomic islands in the pathogenic filamentous fungus Aspergillus fumigatus.</title>
        <authorList>
            <person name="Fedorova N.D."/>
            <person name="Khaldi N."/>
            <person name="Joardar V.S."/>
            <person name="Maiti R."/>
            <person name="Amedeo P."/>
            <person name="Anderson M.J."/>
            <person name="Crabtree J."/>
            <person name="Silva J.C."/>
            <person name="Badger J.H."/>
            <person name="Albarraq A."/>
            <person name="Angiuoli S."/>
            <person name="Bussey H."/>
            <person name="Bowyer P."/>
            <person name="Cotty P.J."/>
            <person name="Dyer P.S."/>
            <person name="Egan A."/>
            <person name="Galens K."/>
            <person name="Fraser-Liggett C.M."/>
            <person name="Haas B.J."/>
            <person name="Inman J.M."/>
            <person name="Kent R."/>
            <person name="Lemieux S."/>
            <person name="Malavazi I."/>
            <person name="Orvis J."/>
            <person name="Roemer T."/>
            <person name="Ronning C.M."/>
            <person name="Sundaram J.P."/>
            <person name="Sutton G."/>
            <person name="Turner G."/>
            <person name="Venter J.C."/>
            <person name="White O.R."/>
            <person name="Whitty B.R."/>
            <person name="Youngman P."/>
            <person name="Wolfe K.H."/>
            <person name="Goldman G.H."/>
            <person name="Wortman J.R."/>
            <person name="Jiang B."/>
            <person name="Denning D.W."/>
            <person name="Nierman W.C."/>
        </authorList>
    </citation>
    <scope>NUCLEOTIDE SEQUENCE [LARGE SCALE GENOMIC DNA]</scope>
    <source>
        <strain>ATCC 1020 / DSM 3700 / CBS 544.65 / FGSC A1164 / JCM 1740 / NRRL 181 / WB 181</strain>
    </source>
</reference>
<protein>
    <recommendedName>
        <fullName>Probable mannosyl-oligosaccharide alpha-1,2-mannosidase 1B</fullName>
        <ecNumber evidence="3">3.2.1.113</ecNumber>
    </recommendedName>
    <alternativeName>
        <fullName>Class I alpha-mannosidase 1B</fullName>
    </alternativeName>
    <alternativeName>
        <fullName>Man(9)-alpha-mannosidase 1B</fullName>
    </alternativeName>
</protein>
<dbReference type="EC" id="3.2.1.113" evidence="3"/>
<dbReference type="EMBL" id="DS027688">
    <property type="protein sequence ID" value="EAW22404.1"/>
    <property type="molecule type" value="Genomic_DNA"/>
</dbReference>
<dbReference type="RefSeq" id="XP_001264301.1">
    <property type="nucleotide sequence ID" value="XM_001264300.1"/>
</dbReference>
<dbReference type="SMR" id="A1D1W1"/>
<dbReference type="STRING" id="331117.A1D1W1"/>
<dbReference type="GlyCosmos" id="A1D1W1">
    <property type="glycosylation" value="3 sites, No reported glycans"/>
</dbReference>
<dbReference type="EnsemblFungi" id="EAW22404">
    <property type="protein sequence ID" value="EAW22404"/>
    <property type="gene ID" value="NFIA_010860"/>
</dbReference>
<dbReference type="GeneID" id="4591109"/>
<dbReference type="KEGG" id="nfi:NFIA_010860"/>
<dbReference type="VEuPathDB" id="FungiDB:NFIA_010860"/>
<dbReference type="eggNOG" id="KOG2204">
    <property type="taxonomic scope" value="Eukaryota"/>
</dbReference>
<dbReference type="HOGENOM" id="CLU_003818_0_2_1"/>
<dbReference type="OMA" id="PESFGWD"/>
<dbReference type="OrthoDB" id="8118055at2759"/>
<dbReference type="UniPathway" id="UPA00378"/>
<dbReference type="Proteomes" id="UP000006702">
    <property type="component" value="Unassembled WGS sequence"/>
</dbReference>
<dbReference type="GO" id="GO:0060205">
    <property type="term" value="C:cytoplasmic vesicle lumen"/>
    <property type="evidence" value="ECO:0007669"/>
    <property type="project" value="UniProtKB-SubCell"/>
</dbReference>
<dbReference type="GO" id="GO:0005783">
    <property type="term" value="C:endoplasmic reticulum"/>
    <property type="evidence" value="ECO:0007669"/>
    <property type="project" value="TreeGrafter"/>
</dbReference>
<dbReference type="GO" id="GO:0016020">
    <property type="term" value="C:membrane"/>
    <property type="evidence" value="ECO:0007669"/>
    <property type="project" value="InterPro"/>
</dbReference>
<dbReference type="GO" id="GO:0005509">
    <property type="term" value="F:calcium ion binding"/>
    <property type="evidence" value="ECO:0007669"/>
    <property type="project" value="InterPro"/>
</dbReference>
<dbReference type="GO" id="GO:0004571">
    <property type="term" value="F:mannosyl-oligosaccharide 1,2-alpha-mannosidase activity"/>
    <property type="evidence" value="ECO:0007669"/>
    <property type="project" value="UniProtKB-EC"/>
</dbReference>
<dbReference type="GO" id="GO:0005975">
    <property type="term" value="P:carbohydrate metabolic process"/>
    <property type="evidence" value="ECO:0007669"/>
    <property type="project" value="InterPro"/>
</dbReference>
<dbReference type="GO" id="GO:0036503">
    <property type="term" value="P:ERAD pathway"/>
    <property type="evidence" value="ECO:0007669"/>
    <property type="project" value="UniProtKB-ARBA"/>
</dbReference>
<dbReference type="GO" id="GO:0006486">
    <property type="term" value="P:protein glycosylation"/>
    <property type="evidence" value="ECO:0007669"/>
    <property type="project" value="UniProtKB-UniPathway"/>
</dbReference>
<dbReference type="FunFam" id="1.50.10.10:FF:000047">
    <property type="entry name" value="Mannosyl-oligosaccharide alpha-1,2-mannosidase"/>
    <property type="match status" value="1"/>
</dbReference>
<dbReference type="Gene3D" id="1.50.10.10">
    <property type="match status" value="1"/>
</dbReference>
<dbReference type="InterPro" id="IPR012341">
    <property type="entry name" value="6hp_glycosidase-like_sf"/>
</dbReference>
<dbReference type="InterPro" id="IPR001382">
    <property type="entry name" value="Glyco_hydro_47"/>
</dbReference>
<dbReference type="InterPro" id="IPR050749">
    <property type="entry name" value="Glycosyl_Hydrolase_47"/>
</dbReference>
<dbReference type="InterPro" id="IPR036026">
    <property type="entry name" value="Seven-hairpin_glycosidases"/>
</dbReference>
<dbReference type="PANTHER" id="PTHR11742:SF101">
    <property type="entry name" value="MANNOSYL-OLIGOSACCHARIDE ALPHA-1,2-MANNOSIDASE 1B"/>
    <property type="match status" value="1"/>
</dbReference>
<dbReference type="PANTHER" id="PTHR11742">
    <property type="entry name" value="MANNOSYL-OLIGOSACCHARIDE ALPHA-1,2-MANNOSIDASE-RELATED"/>
    <property type="match status" value="1"/>
</dbReference>
<dbReference type="Pfam" id="PF01532">
    <property type="entry name" value="Glyco_hydro_47"/>
    <property type="match status" value="1"/>
</dbReference>
<dbReference type="PRINTS" id="PR00747">
    <property type="entry name" value="GLYHDRLASE47"/>
</dbReference>
<dbReference type="SUPFAM" id="SSF48225">
    <property type="entry name" value="Seven-hairpin glycosidases"/>
    <property type="match status" value="1"/>
</dbReference>
<name>MNS1B_NEOFI</name>
<proteinExistence type="inferred from homology"/>
<feature type="signal peptide" evidence="5">
    <location>
        <begin position="1"/>
        <end position="18"/>
    </location>
</feature>
<feature type="chain" id="PRO_0000394824" description="Probable mannosyl-oligosaccharide alpha-1,2-mannosidase 1B">
    <location>
        <begin position="19"/>
        <end position="493"/>
    </location>
</feature>
<feature type="active site" description="Proton donor" evidence="2">
    <location>
        <position position="367"/>
    </location>
</feature>
<feature type="glycosylation site" description="N-linked (GlcNAc...) asparagine" evidence="5">
    <location>
        <position position="87"/>
    </location>
</feature>
<feature type="glycosylation site" description="N-linked (GlcNAc...) asparagine" evidence="5">
    <location>
        <position position="174"/>
    </location>
</feature>
<feature type="glycosylation site" description="N-linked (GlcNAc...) asparagine" evidence="5">
    <location>
        <position position="489"/>
    </location>
</feature>
<feature type="disulfide bond" evidence="3">
    <location>
        <begin position="324"/>
        <end position="353"/>
    </location>
</feature>
<comment type="function">
    <text evidence="1">Involved in the maturation of Asn-linked oligosaccharides. Progressively trims alpha-1,2-linked mannose residues from Man(9)GlcNAc(2) to produce Man(5)GlcNAc(2) (By similarity).</text>
</comment>
<comment type="catalytic activity">
    <reaction evidence="3">
        <text>N(4)-(alpha-D-Man-(1-&gt;2)-alpha-D-Man-(1-&gt;2)-alpha-D-Man-(1-&gt;3)-[alpha-D-Man-(1-&gt;2)-alpha-D-Man-(1-&gt;3)-[alpha-D-Man-(1-&gt;2)-alpha-D-Man-(1-&gt;6)]-alpha-D-Man-(1-&gt;6)]-beta-D-Man-(1-&gt;4)-beta-D-GlcNAc-(1-&gt;4)-beta-D-GlcNAc)-L-asparaginyl-[protein] (N-glucan mannose isomer 9A1,2,3B1,2,3) + 4 H2O = N(4)-(alpha-D-Man-(1-&gt;3)-[alpha-D-Man-(1-&gt;3)-[alpha-D-Man-(1-&gt;6)]-alpha-D-Man-(1-&gt;6)]-beta-D-Man-(1-&gt;4)-beta-D-GlcNAc-(1-&gt;4)-beta-D-GlcNAc)-L-asparaginyl-[protein] (N-glucan mannose isomer 5A1,2) + 4 beta-D-mannose</text>
        <dbReference type="Rhea" id="RHEA:56008"/>
        <dbReference type="Rhea" id="RHEA-COMP:14356"/>
        <dbReference type="Rhea" id="RHEA-COMP:14367"/>
        <dbReference type="ChEBI" id="CHEBI:15377"/>
        <dbReference type="ChEBI" id="CHEBI:28563"/>
        <dbReference type="ChEBI" id="CHEBI:59087"/>
        <dbReference type="ChEBI" id="CHEBI:139493"/>
        <dbReference type="EC" id="3.2.1.113"/>
    </reaction>
</comment>
<comment type="catalytic activity">
    <reaction evidence="3">
        <text>N(4)-(alpha-D-Man-(1-&gt;2)-alpha-D-Man-(1-&gt;2)-alpha-D-Man-(1-&gt;3)-[alpha-D-Man-(1-&gt;3)-[alpha-D-Man-(1-&gt;2)-alpha-D-Man-(1-&gt;6)]-alpha-D-Man-(1-&gt;6)]-beta-D-Man-(1-&gt;4)-beta-D-GlcNAc-(1-&gt;4)-beta-D-GlcNAc)-L-asparaginyl-[protein] (N-glucan mannose isomer 8A1,2,3B1,3) + 3 H2O = N(4)-(alpha-D-Man-(1-&gt;3)-[alpha-D-Man-(1-&gt;3)-[alpha-D-Man-(1-&gt;6)]-alpha-D-Man-(1-&gt;6)]-beta-D-Man-(1-&gt;4)-beta-D-GlcNAc-(1-&gt;4)-beta-D-GlcNAc)-L-asparaginyl-[protein] (N-glucan mannose isomer 5A1,2) + 3 beta-D-mannose</text>
        <dbReference type="Rhea" id="RHEA:56028"/>
        <dbReference type="Rhea" id="RHEA-COMP:14358"/>
        <dbReference type="Rhea" id="RHEA-COMP:14367"/>
        <dbReference type="ChEBI" id="CHEBI:15377"/>
        <dbReference type="ChEBI" id="CHEBI:28563"/>
        <dbReference type="ChEBI" id="CHEBI:59087"/>
        <dbReference type="ChEBI" id="CHEBI:60628"/>
        <dbReference type="EC" id="3.2.1.113"/>
    </reaction>
</comment>
<comment type="cofactor">
    <cofactor evidence="4">
        <name>Ca(2+)</name>
        <dbReference type="ChEBI" id="CHEBI:29108"/>
    </cofactor>
    <cofactor evidence="4">
        <name>Mg(2+)</name>
        <dbReference type="ChEBI" id="CHEBI:18420"/>
    </cofactor>
    <text evidence="4">Ca(2+). Can also use Mg(2+), but with lower efficiency.</text>
</comment>
<comment type="pathway">
    <text evidence="3">Protein modification; protein glycosylation.</text>
</comment>
<comment type="subunit">
    <text evidence="1">Monomer.</text>
</comment>
<comment type="subcellular location">
    <subcellularLocation>
        <location evidence="1">Cytoplasmic vesicle lumen</location>
    </subcellularLocation>
</comment>
<comment type="similarity">
    <text evidence="6">Belongs to the glycosyl hydrolase 47 family.</text>
</comment>
<accession>A1D1W1</accession>
<organism>
    <name type="scientific">Neosartorya fischeri (strain ATCC 1020 / DSM 3700 / CBS 544.65 / FGSC A1164 / JCM 1740 / NRRL 181 / WB 181)</name>
    <name type="common">Aspergillus fischerianus</name>
    <dbReference type="NCBI Taxonomy" id="331117"/>
    <lineage>
        <taxon>Eukaryota</taxon>
        <taxon>Fungi</taxon>
        <taxon>Dikarya</taxon>
        <taxon>Ascomycota</taxon>
        <taxon>Pezizomycotina</taxon>
        <taxon>Eurotiomycetes</taxon>
        <taxon>Eurotiomycetidae</taxon>
        <taxon>Eurotiales</taxon>
        <taxon>Aspergillaceae</taxon>
        <taxon>Aspergillus</taxon>
        <taxon>Aspergillus subgen. Fumigati</taxon>
    </lineage>
</organism>
<gene>
    <name type="primary">mns1B</name>
    <name type="synonym">msdS</name>
    <name type="ORF">NFIA_010860</name>
</gene>
<evidence type="ECO:0000250" key="1"/>
<evidence type="ECO:0000250" key="2">
    <source>
        <dbReference type="UniProtKB" id="P31723"/>
    </source>
</evidence>
<evidence type="ECO:0000250" key="3">
    <source>
        <dbReference type="UniProtKB" id="P32906"/>
    </source>
</evidence>
<evidence type="ECO:0000250" key="4">
    <source>
        <dbReference type="UniProtKB" id="Q2ULB2"/>
    </source>
</evidence>
<evidence type="ECO:0000255" key="5"/>
<evidence type="ECO:0000305" key="6"/>